<name>HEMH_LEPBA</name>
<organism>
    <name type="scientific">Leptospira biflexa serovar Patoc (strain Patoc 1 / Ames)</name>
    <dbReference type="NCBI Taxonomy" id="355278"/>
    <lineage>
        <taxon>Bacteria</taxon>
        <taxon>Pseudomonadati</taxon>
        <taxon>Spirochaetota</taxon>
        <taxon>Spirochaetia</taxon>
        <taxon>Leptospirales</taxon>
        <taxon>Leptospiraceae</taxon>
        <taxon>Leptospira</taxon>
    </lineage>
</organism>
<dbReference type="EC" id="4.98.1.1" evidence="1"/>
<dbReference type="EMBL" id="CP000777">
    <property type="protein sequence ID" value="ABZ93647.1"/>
    <property type="molecule type" value="Genomic_DNA"/>
</dbReference>
<dbReference type="RefSeq" id="WP_012388161.1">
    <property type="nucleotide sequence ID" value="NC_010842.1"/>
</dbReference>
<dbReference type="SMR" id="B0SF60"/>
<dbReference type="KEGG" id="lbf:LBF_1123"/>
<dbReference type="HOGENOM" id="CLU_018884_4_1_12"/>
<dbReference type="UniPathway" id="UPA00252">
    <property type="reaction ID" value="UER00325"/>
</dbReference>
<dbReference type="GO" id="GO:0005737">
    <property type="term" value="C:cytoplasm"/>
    <property type="evidence" value="ECO:0007669"/>
    <property type="project" value="UniProtKB-SubCell"/>
</dbReference>
<dbReference type="GO" id="GO:0004325">
    <property type="term" value="F:ferrochelatase activity"/>
    <property type="evidence" value="ECO:0007669"/>
    <property type="project" value="UniProtKB-UniRule"/>
</dbReference>
<dbReference type="GO" id="GO:0046872">
    <property type="term" value="F:metal ion binding"/>
    <property type="evidence" value="ECO:0007669"/>
    <property type="project" value="UniProtKB-KW"/>
</dbReference>
<dbReference type="GO" id="GO:0006783">
    <property type="term" value="P:heme biosynthetic process"/>
    <property type="evidence" value="ECO:0007669"/>
    <property type="project" value="UniProtKB-UniRule"/>
</dbReference>
<dbReference type="CDD" id="cd00419">
    <property type="entry name" value="Ferrochelatase_C"/>
    <property type="match status" value="1"/>
</dbReference>
<dbReference type="CDD" id="cd03411">
    <property type="entry name" value="Ferrochelatase_N"/>
    <property type="match status" value="1"/>
</dbReference>
<dbReference type="Gene3D" id="3.40.50.1400">
    <property type="match status" value="2"/>
</dbReference>
<dbReference type="HAMAP" id="MF_00323">
    <property type="entry name" value="Ferrochelatase"/>
    <property type="match status" value="1"/>
</dbReference>
<dbReference type="InterPro" id="IPR001015">
    <property type="entry name" value="Ferrochelatase"/>
</dbReference>
<dbReference type="InterPro" id="IPR019772">
    <property type="entry name" value="Ferrochelatase_AS"/>
</dbReference>
<dbReference type="InterPro" id="IPR033644">
    <property type="entry name" value="Ferrochelatase_C"/>
</dbReference>
<dbReference type="InterPro" id="IPR033659">
    <property type="entry name" value="Ferrochelatase_N"/>
</dbReference>
<dbReference type="NCBIfam" id="TIGR00109">
    <property type="entry name" value="hemH"/>
    <property type="match status" value="1"/>
</dbReference>
<dbReference type="PANTHER" id="PTHR11108">
    <property type="entry name" value="FERROCHELATASE"/>
    <property type="match status" value="1"/>
</dbReference>
<dbReference type="PANTHER" id="PTHR11108:SF1">
    <property type="entry name" value="FERROCHELATASE, MITOCHONDRIAL"/>
    <property type="match status" value="1"/>
</dbReference>
<dbReference type="Pfam" id="PF00762">
    <property type="entry name" value="Ferrochelatase"/>
    <property type="match status" value="1"/>
</dbReference>
<dbReference type="SUPFAM" id="SSF53800">
    <property type="entry name" value="Chelatase"/>
    <property type="match status" value="1"/>
</dbReference>
<dbReference type="PROSITE" id="PS00534">
    <property type="entry name" value="FERROCHELATASE"/>
    <property type="match status" value="1"/>
</dbReference>
<sequence length="362" mass="41044">MITNKVKTLILVNLGGPRTPSEIEVFLRDLFSDPFVFDLPLPEFLRLRLARFIAKKRAPKVQKSYESMGFGGGSPLVEETAKQAHALELALNERSSEQWNVKVAMACGYPNMRDIEFGKPNQDTVYLPLYPQFSRSTVLSTLAILETKFGECPVGSGGYVPHFGLDPNFHSISAKFIYEFFTNQLPKDQYLHYPEEKPNCDWRNLDLVFSAHGVPMRLIHKGDRYMEEVELSVKGIADELSKFGFNGGVHISYQSKVGPAKWTEPSTIQMISSLAKQGKHIAVYPISFVSDHLETLEEIGEQFKDLTWEMGGKSFVRIPALGIYPSFIQFLAEKVMHSDRKIQHCICREKGGESLQHCRFKD</sequence>
<protein>
    <recommendedName>
        <fullName evidence="1">Ferrochelatase</fullName>
        <ecNumber evidence="1">4.98.1.1</ecNumber>
    </recommendedName>
    <alternativeName>
        <fullName evidence="1">Heme synthase</fullName>
    </alternativeName>
    <alternativeName>
        <fullName evidence="1">Protoheme ferro-lyase</fullName>
    </alternativeName>
</protein>
<proteinExistence type="inferred from homology"/>
<gene>
    <name evidence="1" type="primary">hemH</name>
    <name type="ordered locus">LBF_1123</name>
</gene>
<evidence type="ECO:0000255" key="1">
    <source>
        <dbReference type="HAMAP-Rule" id="MF_00323"/>
    </source>
</evidence>
<reference key="1">
    <citation type="journal article" date="2008" name="PLoS ONE">
        <title>Genome sequence of the saprophyte Leptospira biflexa provides insights into the evolution of Leptospira and the pathogenesis of leptospirosis.</title>
        <authorList>
            <person name="Picardeau M."/>
            <person name="Bulach D.M."/>
            <person name="Bouchier C."/>
            <person name="Zuerner R.L."/>
            <person name="Zidane N."/>
            <person name="Wilson P.J."/>
            <person name="Creno S."/>
            <person name="Kuczek E.S."/>
            <person name="Bommezzadri S."/>
            <person name="Davis J.C."/>
            <person name="McGrath A."/>
            <person name="Johnson M.J."/>
            <person name="Boursaux-Eude C."/>
            <person name="Seemann T."/>
            <person name="Rouy Z."/>
            <person name="Coppel R.L."/>
            <person name="Rood J.I."/>
            <person name="Lajus A."/>
            <person name="Davies J.K."/>
            <person name="Medigue C."/>
            <person name="Adler B."/>
        </authorList>
    </citation>
    <scope>NUCLEOTIDE SEQUENCE [LARGE SCALE GENOMIC DNA]</scope>
    <source>
        <strain>Patoc 1 / Ames</strain>
    </source>
</reference>
<feature type="chain" id="PRO_1000116057" description="Ferrochelatase">
    <location>
        <begin position="1"/>
        <end position="362"/>
    </location>
</feature>
<feature type="binding site" evidence="1">
    <location>
        <position position="212"/>
    </location>
    <ligand>
        <name>Fe cation</name>
        <dbReference type="ChEBI" id="CHEBI:24875"/>
    </ligand>
</feature>
<feature type="binding site" evidence="1">
    <location>
        <position position="294"/>
    </location>
    <ligand>
        <name>Fe cation</name>
        <dbReference type="ChEBI" id="CHEBI:24875"/>
    </ligand>
</feature>
<comment type="function">
    <text evidence="1">Catalyzes the ferrous insertion into protoporphyrin IX.</text>
</comment>
<comment type="catalytic activity">
    <reaction evidence="1">
        <text>heme b + 2 H(+) = protoporphyrin IX + Fe(2+)</text>
        <dbReference type="Rhea" id="RHEA:22584"/>
        <dbReference type="ChEBI" id="CHEBI:15378"/>
        <dbReference type="ChEBI" id="CHEBI:29033"/>
        <dbReference type="ChEBI" id="CHEBI:57306"/>
        <dbReference type="ChEBI" id="CHEBI:60344"/>
        <dbReference type="EC" id="4.98.1.1"/>
    </reaction>
</comment>
<comment type="pathway">
    <text evidence="1">Porphyrin-containing compound metabolism; protoheme biosynthesis; protoheme from protoporphyrin-IX: step 1/1.</text>
</comment>
<comment type="subcellular location">
    <subcellularLocation>
        <location evidence="1">Cytoplasm</location>
    </subcellularLocation>
</comment>
<comment type="similarity">
    <text evidence="1">Belongs to the ferrochelatase family.</text>
</comment>
<accession>B0SF60</accession>
<keyword id="KW-0963">Cytoplasm</keyword>
<keyword id="KW-0350">Heme biosynthesis</keyword>
<keyword id="KW-0408">Iron</keyword>
<keyword id="KW-0456">Lyase</keyword>
<keyword id="KW-0479">Metal-binding</keyword>
<keyword id="KW-0627">Porphyrin biosynthesis</keyword>